<organism>
    <name type="scientific">Salmonella paratyphi B (strain ATCC BAA-1250 / SPB7)</name>
    <dbReference type="NCBI Taxonomy" id="1016998"/>
    <lineage>
        <taxon>Bacteria</taxon>
        <taxon>Pseudomonadati</taxon>
        <taxon>Pseudomonadota</taxon>
        <taxon>Gammaproteobacteria</taxon>
        <taxon>Enterobacterales</taxon>
        <taxon>Enterobacteriaceae</taxon>
        <taxon>Salmonella</taxon>
    </lineage>
</organism>
<feature type="chain" id="PRO_1000088033" description="Iron-sulfur cluster repair protein YtfE">
    <location>
        <begin position="1"/>
        <end position="220"/>
    </location>
</feature>
<dbReference type="EMBL" id="CP000886">
    <property type="protein sequence ID" value="ABX70806.1"/>
    <property type="molecule type" value="Genomic_DNA"/>
</dbReference>
<dbReference type="RefSeq" id="WP_000331471.1">
    <property type="nucleotide sequence ID" value="NC_010102.1"/>
</dbReference>
<dbReference type="SMR" id="A9N529"/>
<dbReference type="KEGG" id="spq:SPAB_05537"/>
<dbReference type="PATRIC" id="fig|1016998.12.peg.5190"/>
<dbReference type="HOGENOM" id="CLU_076075_2_0_6"/>
<dbReference type="BioCyc" id="SENT1016998:SPAB_RS22615-MONOMER"/>
<dbReference type="Proteomes" id="UP000008556">
    <property type="component" value="Chromosome"/>
</dbReference>
<dbReference type="GO" id="GO:0005737">
    <property type="term" value="C:cytoplasm"/>
    <property type="evidence" value="ECO:0007669"/>
    <property type="project" value="UniProtKB-SubCell"/>
</dbReference>
<dbReference type="GO" id="GO:0046872">
    <property type="term" value="F:metal ion binding"/>
    <property type="evidence" value="ECO:0007669"/>
    <property type="project" value="UniProtKB-KW"/>
</dbReference>
<dbReference type="GO" id="GO:0030091">
    <property type="term" value="P:protein repair"/>
    <property type="evidence" value="ECO:0007669"/>
    <property type="project" value="UniProtKB-UniRule"/>
</dbReference>
<dbReference type="GO" id="GO:0051409">
    <property type="term" value="P:response to nitrosative stress"/>
    <property type="evidence" value="ECO:0007669"/>
    <property type="project" value="UniProtKB-UniRule"/>
</dbReference>
<dbReference type="GO" id="GO:0006979">
    <property type="term" value="P:response to oxidative stress"/>
    <property type="evidence" value="ECO:0007669"/>
    <property type="project" value="UniProtKB-UniRule"/>
</dbReference>
<dbReference type="FunFam" id="1.20.120.520:FF:000001">
    <property type="entry name" value="Iron-sulfur cluster repair protein YtfE"/>
    <property type="match status" value="1"/>
</dbReference>
<dbReference type="Gene3D" id="1.20.120.520">
    <property type="entry name" value="nmb1532 protein domain like"/>
    <property type="match status" value="1"/>
</dbReference>
<dbReference type="HAMAP" id="MF_01606">
    <property type="entry name" value="RIC_YtfE"/>
    <property type="match status" value="1"/>
</dbReference>
<dbReference type="InterPro" id="IPR023742">
    <property type="entry name" value="FeS-repair_YftE"/>
</dbReference>
<dbReference type="InterPro" id="IPR012312">
    <property type="entry name" value="Hemerythrin-like"/>
</dbReference>
<dbReference type="InterPro" id="IPR019903">
    <property type="entry name" value="RIC_family"/>
</dbReference>
<dbReference type="NCBIfam" id="TIGR03652">
    <property type="entry name" value="FeS_repair_RIC"/>
    <property type="match status" value="1"/>
</dbReference>
<dbReference type="NCBIfam" id="NF008221">
    <property type="entry name" value="PRK10992.1"/>
    <property type="match status" value="1"/>
</dbReference>
<dbReference type="PANTHER" id="PTHR36438">
    <property type="entry name" value="IRON-SULFUR CLUSTER REPAIR PROTEIN YTFE"/>
    <property type="match status" value="1"/>
</dbReference>
<dbReference type="PANTHER" id="PTHR36438:SF1">
    <property type="entry name" value="IRON-SULFUR CLUSTER REPAIR PROTEIN YTFE"/>
    <property type="match status" value="1"/>
</dbReference>
<dbReference type="Pfam" id="PF01814">
    <property type="entry name" value="Hemerythrin"/>
    <property type="match status" value="1"/>
</dbReference>
<dbReference type="Pfam" id="PF04405">
    <property type="entry name" value="ScdA_N"/>
    <property type="match status" value="1"/>
</dbReference>
<proteinExistence type="inferred from homology"/>
<name>YTFE_SALPB</name>
<keyword id="KW-0963">Cytoplasm</keyword>
<keyword id="KW-0408">Iron</keyword>
<keyword id="KW-0479">Metal-binding</keyword>
<keyword id="KW-0346">Stress response</keyword>
<evidence type="ECO:0000255" key="1">
    <source>
        <dbReference type="HAMAP-Rule" id="MF_01606"/>
    </source>
</evidence>
<accession>A9N529</accession>
<sequence length="220" mass="24911">MAYRDQPLGELALSIPRASALFRQYDMDYCCGGKQTLARAAARHDVDIDIIEAQLAQLAEQPIEKDWRAVPLADIIDHIVVRYHDRHREQLPELILQATKVERVHADKPNVPRGLTKYLTALHEELSSHMMKEEQILFPMIKQGMGRQATGPISVMESEHDEAGELVDVIKHVTQNVTPPPEACTTWKAMYNGINEMIDDLMEHISLENNVLFPRALAGE</sequence>
<comment type="function">
    <text evidence="1">Di-iron-containing protein involved in the repair of iron-sulfur clusters damaged by oxidative and nitrosative stress conditions.</text>
</comment>
<comment type="subunit">
    <text evidence="1">Homodimer.</text>
</comment>
<comment type="subcellular location">
    <subcellularLocation>
        <location evidence="1">Cytoplasm</location>
    </subcellularLocation>
</comment>
<comment type="similarity">
    <text evidence="1">Belongs to the RIC family. YtfE subfamily.</text>
</comment>
<reference key="1">
    <citation type="submission" date="2007-11" db="EMBL/GenBank/DDBJ databases">
        <authorList>
            <consortium name="The Salmonella enterica serovar Paratyphi B Genome Sequencing Project"/>
            <person name="McClelland M."/>
            <person name="Sanderson E.K."/>
            <person name="Porwollik S."/>
            <person name="Spieth J."/>
            <person name="Clifton W.S."/>
            <person name="Fulton R."/>
            <person name="Cordes M."/>
            <person name="Wollam A."/>
            <person name="Shah N."/>
            <person name="Pepin K."/>
            <person name="Bhonagiri V."/>
            <person name="Nash W."/>
            <person name="Johnson M."/>
            <person name="Thiruvilangam P."/>
            <person name="Wilson R."/>
        </authorList>
    </citation>
    <scope>NUCLEOTIDE SEQUENCE [LARGE SCALE GENOMIC DNA]</scope>
    <source>
        <strain>ATCC BAA-1250 / SPB7</strain>
    </source>
</reference>
<gene>
    <name evidence="1" type="primary">ytfE</name>
    <name type="ordered locus">SPAB_05537</name>
</gene>
<protein>
    <recommendedName>
        <fullName evidence="1">Iron-sulfur cluster repair protein YtfE</fullName>
    </recommendedName>
</protein>